<name>T4G1H_AGEOR</name>
<dbReference type="EMBL" id="AY681333">
    <property type="protein sequence ID" value="AAU87893.1"/>
    <property type="molecule type" value="mRNA"/>
</dbReference>
<dbReference type="SMR" id="Q5Y4V1"/>
<dbReference type="TCDB" id="8.B.6.1.6">
    <property type="family name" value="the ca(2+) channel-targeting spider toxin (cst) family"/>
</dbReference>
<dbReference type="ArachnoServer" id="AS000079">
    <property type="toxin name" value="U3-agatoxin-Ao1h"/>
</dbReference>
<dbReference type="GO" id="GO:0005576">
    <property type="term" value="C:extracellular region"/>
    <property type="evidence" value="ECO:0007669"/>
    <property type="project" value="UniProtKB-SubCell"/>
</dbReference>
<dbReference type="GO" id="GO:0044231">
    <property type="term" value="C:host cell presynaptic membrane"/>
    <property type="evidence" value="ECO:0007669"/>
    <property type="project" value="UniProtKB-KW"/>
</dbReference>
<dbReference type="GO" id="GO:0017080">
    <property type="term" value="F:sodium channel regulator activity"/>
    <property type="evidence" value="ECO:0007669"/>
    <property type="project" value="UniProtKB-KW"/>
</dbReference>
<dbReference type="GO" id="GO:0090729">
    <property type="term" value="F:toxin activity"/>
    <property type="evidence" value="ECO:0007669"/>
    <property type="project" value="UniProtKB-KW"/>
</dbReference>
<dbReference type="InterPro" id="IPR016328">
    <property type="entry name" value="Beta/delta-agatoxin_fam"/>
</dbReference>
<dbReference type="Pfam" id="PF05980">
    <property type="entry name" value="Toxin_7"/>
    <property type="match status" value="1"/>
</dbReference>
<dbReference type="SUPFAM" id="SSF57059">
    <property type="entry name" value="omega toxin-like"/>
    <property type="match status" value="1"/>
</dbReference>
<dbReference type="PROSITE" id="PS60015">
    <property type="entry name" value="MU_AGATOXIN"/>
    <property type="match status" value="1"/>
</dbReference>
<accession>Q5Y4V1</accession>
<evidence type="ECO:0000250" key="1"/>
<evidence type="ECO:0000250" key="2">
    <source>
        <dbReference type="UniProtKB" id="P11061"/>
    </source>
</evidence>
<evidence type="ECO:0000250" key="3">
    <source>
        <dbReference type="UniProtKB" id="Q5Y4V3"/>
    </source>
</evidence>
<evidence type="ECO:0000255" key="4"/>
<evidence type="ECO:0000305" key="5"/>
<evidence type="ECO:0000305" key="6">
    <source>
    </source>
</evidence>
<evidence type="ECO:0000312" key="7">
    <source>
        <dbReference type="EMBL" id="AAU87893.1"/>
    </source>
</evidence>
<comment type="function">
    <text evidence="1">Insecticidal neurotoxin that induces an irreversible spastic paralysis when injected into insects. Modifies presynaptic voltage-gated sodium channels (Nav), causing them to open at the normal resting potential of the nerve. This leads to spontaneous release of neurotransmitter and repetitive action potentials in motor neurons (By similarity).</text>
</comment>
<comment type="subcellular location">
    <subcellularLocation>
        <location evidence="1">Secreted</location>
    </subcellularLocation>
</comment>
<comment type="tissue specificity">
    <text>Expressed by the venom gland.</text>
</comment>
<comment type="domain">
    <text evidence="1">The presence of a 'disulfide through disulfide knot' structurally defines this protein as a knottin.</text>
</comment>
<comment type="similarity">
    <text evidence="5">Belongs to the neurotoxin 07 (Beta/delta-agtx) family. 03 (aga-4) subfamily. Aga sub-subfamily.</text>
</comment>
<feature type="signal peptide" evidence="4">
    <location>
        <begin position="1"/>
        <end position="20"/>
    </location>
</feature>
<feature type="propeptide" id="PRO_5000093669" evidence="6">
    <location>
        <begin position="21"/>
        <end position="34"/>
    </location>
</feature>
<feature type="chain" id="PRO_5000093670" description="U3-agatoxin-Ao1h" evidence="6">
    <location>
        <begin position="35"/>
        <end position="72"/>
    </location>
</feature>
<feature type="modified residue" description="Asparagine amide" evidence="3">
    <location>
        <position position="72"/>
    </location>
</feature>
<feature type="disulfide bond" evidence="2">
    <location>
        <begin position="37"/>
        <end position="53"/>
    </location>
</feature>
<feature type="disulfide bond" evidence="2">
    <location>
        <begin position="44"/>
        <end position="58"/>
    </location>
</feature>
<feature type="disulfide bond" evidence="2">
    <location>
        <begin position="52"/>
        <end position="68"/>
    </location>
</feature>
<feature type="disulfide bond" evidence="2">
    <location>
        <begin position="60"/>
        <end position="66"/>
    </location>
</feature>
<sequence>MRAIISLLLISTMVFGVIEAVSVQKSLKIFEGERGDCVGESQQCADWSGPYCCKGYYCTCQYFPKCICVNDNGK</sequence>
<proteinExistence type="evidence at transcript level"/>
<keyword id="KW-0027">Amidation</keyword>
<keyword id="KW-1015">Disulfide bond</keyword>
<keyword id="KW-0872">Ion channel impairing toxin</keyword>
<keyword id="KW-0960">Knottin</keyword>
<keyword id="KW-0528">Neurotoxin</keyword>
<keyword id="KW-0638">Presynaptic neurotoxin</keyword>
<keyword id="KW-0964">Secreted</keyword>
<keyword id="KW-0732">Signal</keyword>
<keyword id="KW-0800">Toxin</keyword>
<keyword id="KW-0738">Voltage-gated sodium channel impairing toxin</keyword>
<reference key="1">
    <citation type="journal article" date="2005" name="Proteins">
        <title>A novel strategy for the identification of toxinlike structures in spider venom.</title>
        <authorList>
            <person name="Kozlov S.A."/>
            <person name="Malyavka A."/>
            <person name="McCutchen B."/>
            <person name="Lu A."/>
            <person name="Schepers E."/>
            <person name="Herrmann R."/>
            <person name="Grishin E.V."/>
        </authorList>
    </citation>
    <scope>NUCLEOTIDE SEQUENCE [MRNA]</scope>
    <source>
        <tissue>Venom gland</tissue>
    </source>
</reference>
<organism>
    <name type="scientific">Agelena orientalis</name>
    <name type="common">Funnel-web spider</name>
    <dbReference type="NCBI Taxonomy" id="293813"/>
    <lineage>
        <taxon>Eukaryota</taxon>
        <taxon>Metazoa</taxon>
        <taxon>Ecdysozoa</taxon>
        <taxon>Arthropoda</taxon>
        <taxon>Chelicerata</taxon>
        <taxon>Arachnida</taxon>
        <taxon>Araneae</taxon>
        <taxon>Araneomorphae</taxon>
        <taxon>Entelegynae</taxon>
        <taxon>Agelenidae</taxon>
        <taxon>Agelena</taxon>
    </lineage>
</organism>
<protein>
    <recommendedName>
        <fullName evidence="5">U3-agatoxin-Ao1h</fullName>
        <shortName evidence="5">U3-AGTX-Ao1h</shortName>
    </recommendedName>
    <alternativeName>
        <fullName evidence="7">Mu-2Aaga_09</fullName>
    </alternativeName>
</protein>